<reference key="1">
    <citation type="journal article" date="2001" name="Genome Res.">
        <title>The complete genome sequence of the lactic acid bacterium Lactococcus lactis ssp. lactis IL1403.</title>
        <authorList>
            <person name="Bolotin A."/>
            <person name="Wincker P."/>
            <person name="Mauger S."/>
            <person name="Jaillon O."/>
            <person name="Malarme K."/>
            <person name="Weissenbach J."/>
            <person name="Ehrlich S.D."/>
            <person name="Sorokin A."/>
        </authorList>
    </citation>
    <scope>NUCLEOTIDE SEQUENCE [LARGE SCALE GENOMIC DNA]</scope>
    <source>
        <strain>IL1403</strain>
    </source>
</reference>
<evidence type="ECO:0000250" key="1"/>
<evidence type="ECO:0000255" key="2">
    <source>
        <dbReference type="PROSITE-ProRule" id="PRU00517"/>
    </source>
</evidence>
<evidence type="ECO:0000255" key="3">
    <source>
        <dbReference type="PROSITE-ProRule" id="PRU01007"/>
    </source>
</evidence>
<proteinExistence type="predicted"/>
<gene>
    <name type="primary">pheA</name>
    <name type="ordered locus">LL1742</name>
    <name type="ORF">L0055</name>
</gene>
<keyword id="KW-0028">Amino-acid biosynthesis</keyword>
<keyword id="KW-0057">Aromatic amino acid biosynthesis</keyword>
<keyword id="KW-0456">Lyase</keyword>
<keyword id="KW-0584">Phenylalanine biosynthesis</keyword>
<keyword id="KW-1185">Reference proteome</keyword>
<sequence>MKIAYLGPRGSFCSVVAETAFVSEELFAYDSILDVIEAYDEGKCDFALVPIENSTEGTVNMSIDKIFHDSKATVVAEFVLPISQNLLALSKEGKIEHIYSHPQALAQTRNYLREHYPQAKVEITDSTSAAAEFVKNHPDLPIAAVANSYAAKMYDLEIVAKNIQDLAGNSTRFWLLGKEKKSFDLLKTGEKVSLALTLPDNLPGALHKAISVFAWRDIDMTKIESRPLRTRLGQYFFNIDLVNNEKNNLKIPYALEELSGLGVKVRLLGNYAVYSLGEG</sequence>
<feature type="chain" id="PRO_0000119178" description="Prephenate dehydratase">
    <location>
        <begin position="1"/>
        <end position="279"/>
    </location>
</feature>
<feature type="domain" description="Prephenate dehydratase" evidence="2">
    <location>
        <begin position="2"/>
        <end position="178"/>
    </location>
</feature>
<feature type="domain" description="ACT" evidence="3">
    <location>
        <begin position="194"/>
        <end position="270"/>
    </location>
</feature>
<feature type="site" description="Essential for activity" evidence="1">
    <location>
        <position position="171"/>
    </location>
</feature>
<dbReference type="EC" id="4.2.1.51"/>
<dbReference type="EMBL" id="AE005176">
    <property type="protein sequence ID" value="AAK05840.1"/>
    <property type="molecule type" value="Genomic_DNA"/>
</dbReference>
<dbReference type="PIR" id="F86842">
    <property type="entry name" value="F86842"/>
</dbReference>
<dbReference type="RefSeq" id="NP_267898.1">
    <property type="nucleotide sequence ID" value="NC_002662.1"/>
</dbReference>
<dbReference type="RefSeq" id="WP_010906115.1">
    <property type="nucleotide sequence ID" value="NC_002662.1"/>
</dbReference>
<dbReference type="SMR" id="Q9CEU2"/>
<dbReference type="PaxDb" id="272623-L0055"/>
<dbReference type="EnsemblBacteria" id="AAK05840">
    <property type="protein sequence ID" value="AAK05840"/>
    <property type="gene ID" value="L0055"/>
</dbReference>
<dbReference type="KEGG" id="lla:L0055"/>
<dbReference type="PATRIC" id="fig|272623.7.peg.1868"/>
<dbReference type="eggNOG" id="COG0077">
    <property type="taxonomic scope" value="Bacteria"/>
</dbReference>
<dbReference type="HOGENOM" id="CLU_035008_0_2_9"/>
<dbReference type="OrthoDB" id="9802281at2"/>
<dbReference type="UniPathway" id="UPA00121">
    <property type="reaction ID" value="UER00345"/>
</dbReference>
<dbReference type="Proteomes" id="UP000002196">
    <property type="component" value="Chromosome"/>
</dbReference>
<dbReference type="GO" id="GO:0005737">
    <property type="term" value="C:cytoplasm"/>
    <property type="evidence" value="ECO:0007669"/>
    <property type="project" value="TreeGrafter"/>
</dbReference>
<dbReference type="GO" id="GO:0004664">
    <property type="term" value="F:prephenate dehydratase activity"/>
    <property type="evidence" value="ECO:0007669"/>
    <property type="project" value="UniProtKB-EC"/>
</dbReference>
<dbReference type="GO" id="GO:0009094">
    <property type="term" value="P:L-phenylalanine biosynthetic process"/>
    <property type="evidence" value="ECO:0007669"/>
    <property type="project" value="UniProtKB-UniPathway"/>
</dbReference>
<dbReference type="CDD" id="cd04905">
    <property type="entry name" value="ACT_CM-PDT"/>
    <property type="match status" value="1"/>
</dbReference>
<dbReference type="CDD" id="cd13633">
    <property type="entry name" value="PBP2_Sa-PDT_like"/>
    <property type="match status" value="1"/>
</dbReference>
<dbReference type="FunFam" id="3.40.190.10:FF:000034">
    <property type="entry name" value="Chorismate mutase/prephenate dehydratase"/>
    <property type="match status" value="1"/>
</dbReference>
<dbReference type="Gene3D" id="3.30.70.260">
    <property type="match status" value="1"/>
</dbReference>
<dbReference type="Gene3D" id="3.40.190.10">
    <property type="entry name" value="Periplasmic binding protein-like II"/>
    <property type="match status" value="2"/>
</dbReference>
<dbReference type="InterPro" id="IPR045865">
    <property type="entry name" value="ACT-like_dom_sf"/>
</dbReference>
<dbReference type="InterPro" id="IPR002912">
    <property type="entry name" value="ACT_dom"/>
</dbReference>
<dbReference type="InterPro" id="IPR001086">
    <property type="entry name" value="Preph_deHydtase"/>
</dbReference>
<dbReference type="InterPro" id="IPR018528">
    <property type="entry name" value="Preph_deHydtase_CS"/>
</dbReference>
<dbReference type="NCBIfam" id="NF008865">
    <property type="entry name" value="PRK11898.1"/>
    <property type="match status" value="1"/>
</dbReference>
<dbReference type="PANTHER" id="PTHR21022">
    <property type="entry name" value="PREPHENATE DEHYDRATASE P PROTEIN"/>
    <property type="match status" value="1"/>
</dbReference>
<dbReference type="PANTHER" id="PTHR21022:SF19">
    <property type="entry name" value="PREPHENATE DEHYDRATASE-RELATED"/>
    <property type="match status" value="1"/>
</dbReference>
<dbReference type="Pfam" id="PF00800">
    <property type="entry name" value="PDT"/>
    <property type="match status" value="1"/>
</dbReference>
<dbReference type="SUPFAM" id="SSF55021">
    <property type="entry name" value="ACT-like"/>
    <property type="match status" value="1"/>
</dbReference>
<dbReference type="SUPFAM" id="SSF53850">
    <property type="entry name" value="Periplasmic binding protein-like II"/>
    <property type="match status" value="1"/>
</dbReference>
<dbReference type="PROSITE" id="PS51671">
    <property type="entry name" value="ACT"/>
    <property type="match status" value="1"/>
</dbReference>
<dbReference type="PROSITE" id="PS00857">
    <property type="entry name" value="PREPHENATE_DEHYDR_1"/>
    <property type="match status" value="1"/>
</dbReference>
<dbReference type="PROSITE" id="PS00858">
    <property type="entry name" value="PREPHENATE_DEHYDR_2"/>
    <property type="match status" value="1"/>
</dbReference>
<dbReference type="PROSITE" id="PS51171">
    <property type="entry name" value="PREPHENATE_DEHYDR_3"/>
    <property type="match status" value="1"/>
</dbReference>
<accession>Q9CEU2</accession>
<organism>
    <name type="scientific">Lactococcus lactis subsp. lactis (strain IL1403)</name>
    <name type="common">Streptococcus lactis</name>
    <dbReference type="NCBI Taxonomy" id="272623"/>
    <lineage>
        <taxon>Bacteria</taxon>
        <taxon>Bacillati</taxon>
        <taxon>Bacillota</taxon>
        <taxon>Bacilli</taxon>
        <taxon>Lactobacillales</taxon>
        <taxon>Streptococcaceae</taxon>
        <taxon>Lactococcus</taxon>
    </lineage>
</organism>
<comment type="catalytic activity">
    <reaction>
        <text>prephenate + H(+) = 3-phenylpyruvate + CO2 + H2O</text>
        <dbReference type="Rhea" id="RHEA:21648"/>
        <dbReference type="ChEBI" id="CHEBI:15377"/>
        <dbReference type="ChEBI" id="CHEBI:15378"/>
        <dbReference type="ChEBI" id="CHEBI:16526"/>
        <dbReference type="ChEBI" id="CHEBI:18005"/>
        <dbReference type="ChEBI" id="CHEBI:29934"/>
        <dbReference type="EC" id="4.2.1.51"/>
    </reaction>
</comment>
<comment type="pathway">
    <text>Amino-acid biosynthesis; L-phenylalanine biosynthesis; phenylpyruvate from prephenate: step 1/1.</text>
</comment>
<name>PHEA_LACLA</name>
<protein>
    <recommendedName>
        <fullName>Prephenate dehydratase</fullName>
        <shortName>PDT</shortName>
        <ecNumber>4.2.1.51</ecNumber>
    </recommendedName>
</protein>